<keyword id="KW-0963">Cytoplasm</keyword>
<keyword id="KW-0269">Exonuclease</keyword>
<keyword id="KW-0378">Hydrolase</keyword>
<keyword id="KW-0540">Nuclease</keyword>
<keyword id="KW-1185">Reference proteome</keyword>
<gene>
    <name evidence="1" type="primary">xseA</name>
    <name type="ordered locus">TM_1768</name>
</gene>
<organism>
    <name type="scientific">Thermotoga maritima (strain ATCC 43589 / DSM 3109 / JCM 10099 / NBRC 100826 / MSB8)</name>
    <dbReference type="NCBI Taxonomy" id="243274"/>
    <lineage>
        <taxon>Bacteria</taxon>
        <taxon>Thermotogati</taxon>
        <taxon>Thermotogota</taxon>
        <taxon>Thermotogae</taxon>
        <taxon>Thermotogales</taxon>
        <taxon>Thermotogaceae</taxon>
        <taxon>Thermotoga</taxon>
    </lineage>
</organism>
<sequence length="394" mass="45353">MKDYTYSVTEINEYIKDLIEGDPYLTNVSVYGEISGVRPRKGHIFFSLVEENARLECVIFGGDNMGIRLQEGRMALVEGSVSVYIPHGTYRFICSNVRYLDQAGMYQIKFETTLKKLLEEGLLSRPKKTVPRFPRKIGIITSRDSAALQDVIRTARERKAPIEIYVFHTSVQGDSAREELIKALRKANEYDLDLVMIVRGGGSKEDLWVFNEEDVIREILRLRHPVVTGIGHEIDRVIADFVADVSMHTPTGAAEYVIPDASEIHEDLDSFFEKLITSLSNRFDMEERRLETLYFRLRMIGRRKLELNEFKIERVKELAAKLRKKLMDYFEHNQKKLDSLGRMLESLNPLRPLERGFVLVKKDEKIVKESTDLKRGDVVSLVFKDGTKKAQVIG</sequence>
<proteinExistence type="inferred from homology"/>
<dbReference type="EC" id="3.1.11.6" evidence="1"/>
<dbReference type="EMBL" id="AE000512">
    <property type="protein sequence ID" value="AAD36832.1"/>
    <property type="molecule type" value="Genomic_DNA"/>
</dbReference>
<dbReference type="PIR" id="G72212">
    <property type="entry name" value="G72212"/>
</dbReference>
<dbReference type="RefSeq" id="NP_229565.1">
    <property type="nucleotide sequence ID" value="NC_000853.1"/>
</dbReference>
<dbReference type="RefSeq" id="WP_004082314.1">
    <property type="nucleotide sequence ID" value="NC_000853.1"/>
</dbReference>
<dbReference type="SMR" id="Q9X289"/>
<dbReference type="FunCoup" id="Q9X289">
    <property type="interactions" value="315"/>
</dbReference>
<dbReference type="STRING" id="243274.TM_1768"/>
<dbReference type="PaxDb" id="243274-THEMA_05385"/>
<dbReference type="EnsemblBacteria" id="AAD36832">
    <property type="protein sequence ID" value="AAD36832"/>
    <property type="gene ID" value="TM_1768"/>
</dbReference>
<dbReference type="KEGG" id="tma:TM1768"/>
<dbReference type="KEGG" id="tmi:THEMA_05385"/>
<dbReference type="KEGG" id="tmm:Tmari_1777"/>
<dbReference type="KEGG" id="tmw:THMA_1812"/>
<dbReference type="eggNOG" id="COG1570">
    <property type="taxonomic scope" value="Bacteria"/>
</dbReference>
<dbReference type="InParanoid" id="Q9X289"/>
<dbReference type="OrthoDB" id="9802795at2"/>
<dbReference type="Proteomes" id="UP000008183">
    <property type="component" value="Chromosome"/>
</dbReference>
<dbReference type="GO" id="GO:0005737">
    <property type="term" value="C:cytoplasm"/>
    <property type="evidence" value="ECO:0007669"/>
    <property type="project" value="UniProtKB-SubCell"/>
</dbReference>
<dbReference type="GO" id="GO:0009318">
    <property type="term" value="C:exodeoxyribonuclease VII complex"/>
    <property type="evidence" value="ECO:0007669"/>
    <property type="project" value="InterPro"/>
</dbReference>
<dbReference type="GO" id="GO:0008855">
    <property type="term" value="F:exodeoxyribonuclease VII activity"/>
    <property type="evidence" value="ECO:0007669"/>
    <property type="project" value="UniProtKB-UniRule"/>
</dbReference>
<dbReference type="GO" id="GO:0003676">
    <property type="term" value="F:nucleic acid binding"/>
    <property type="evidence" value="ECO:0007669"/>
    <property type="project" value="InterPro"/>
</dbReference>
<dbReference type="GO" id="GO:0006308">
    <property type="term" value="P:DNA catabolic process"/>
    <property type="evidence" value="ECO:0007669"/>
    <property type="project" value="UniProtKB-UniRule"/>
</dbReference>
<dbReference type="CDD" id="cd04489">
    <property type="entry name" value="ExoVII_LU_OBF"/>
    <property type="match status" value="1"/>
</dbReference>
<dbReference type="HAMAP" id="MF_00378">
    <property type="entry name" value="Exonuc_7_L"/>
    <property type="match status" value="1"/>
</dbReference>
<dbReference type="InterPro" id="IPR003753">
    <property type="entry name" value="Exonuc_VII_L"/>
</dbReference>
<dbReference type="InterPro" id="IPR020579">
    <property type="entry name" value="Exonuc_VII_lsu_C"/>
</dbReference>
<dbReference type="InterPro" id="IPR025824">
    <property type="entry name" value="OB-fold_nuc-bd_dom"/>
</dbReference>
<dbReference type="NCBIfam" id="TIGR00237">
    <property type="entry name" value="xseA"/>
    <property type="match status" value="1"/>
</dbReference>
<dbReference type="PANTHER" id="PTHR30008">
    <property type="entry name" value="EXODEOXYRIBONUCLEASE 7 LARGE SUBUNIT"/>
    <property type="match status" value="1"/>
</dbReference>
<dbReference type="PANTHER" id="PTHR30008:SF0">
    <property type="entry name" value="EXODEOXYRIBONUCLEASE 7 LARGE SUBUNIT"/>
    <property type="match status" value="1"/>
</dbReference>
<dbReference type="Pfam" id="PF02601">
    <property type="entry name" value="Exonuc_VII_L"/>
    <property type="match status" value="2"/>
</dbReference>
<dbReference type="Pfam" id="PF13742">
    <property type="entry name" value="tRNA_anti_2"/>
    <property type="match status" value="1"/>
</dbReference>
<accession>Q9X289</accession>
<reference key="1">
    <citation type="journal article" date="1999" name="Nature">
        <title>Evidence for lateral gene transfer between Archaea and Bacteria from genome sequence of Thermotoga maritima.</title>
        <authorList>
            <person name="Nelson K.E."/>
            <person name="Clayton R.A."/>
            <person name="Gill S.R."/>
            <person name="Gwinn M.L."/>
            <person name="Dodson R.J."/>
            <person name="Haft D.H."/>
            <person name="Hickey E.K."/>
            <person name="Peterson J.D."/>
            <person name="Nelson W.C."/>
            <person name="Ketchum K.A."/>
            <person name="McDonald L.A."/>
            <person name="Utterback T.R."/>
            <person name="Malek J.A."/>
            <person name="Linher K.D."/>
            <person name="Garrett M.M."/>
            <person name="Stewart A.M."/>
            <person name="Cotton M.D."/>
            <person name="Pratt M.S."/>
            <person name="Phillips C.A."/>
            <person name="Richardson D.L."/>
            <person name="Heidelberg J.F."/>
            <person name="Sutton G.G."/>
            <person name="Fleischmann R.D."/>
            <person name="Eisen J.A."/>
            <person name="White O."/>
            <person name="Salzberg S.L."/>
            <person name="Smith H.O."/>
            <person name="Venter J.C."/>
            <person name="Fraser C.M."/>
        </authorList>
    </citation>
    <scope>NUCLEOTIDE SEQUENCE [LARGE SCALE GENOMIC DNA]</scope>
    <source>
        <strain>ATCC 43589 / DSM 3109 / JCM 10099 / NBRC 100826 / MSB8</strain>
    </source>
</reference>
<name>EX7L_THEMA</name>
<comment type="function">
    <text evidence="1">Bidirectionally degrades single-stranded DNA into large acid-insoluble oligonucleotides, which are then degraded further into small acid-soluble oligonucleotides.</text>
</comment>
<comment type="catalytic activity">
    <reaction evidence="1">
        <text>Exonucleolytic cleavage in either 5'- to 3'- or 3'- to 5'-direction to yield nucleoside 5'-phosphates.</text>
        <dbReference type="EC" id="3.1.11.6"/>
    </reaction>
</comment>
<comment type="subunit">
    <text evidence="1">Heterooligomer composed of large and small subunits.</text>
</comment>
<comment type="subcellular location">
    <subcellularLocation>
        <location evidence="1">Cytoplasm</location>
    </subcellularLocation>
</comment>
<comment type="similarity">
    <text evidence="1">Belongs to the XseA family.</text>
</comment>
<evidence type="ECO:0000255" key="1">
    <source>
        <dbReference type="HAMAP-Rule" id="MF_00378"/>
    </source>
</evidence>
<feature type="chain" id="PRO_0000197897" description="Exodeoxyribonuclease 7 large subunit">
    <location>
        <begin position="1"/>
        <end position="394"/>
    </location>
</feature>
<protein>
    <recommendedName>
        <fullName evidence="1">Exodeoxyribonuclease 7 large subunit</fullName>
        <ecNumber evidence="1">3.1.11.6</ecNumber>
    </recommendedName>
    <alternativeName>
        <fullName evidence="1">Exodeoxyribonuclease VII large subunit</fullName>
        <shortName evidence="1">Exonuclease VII large subunit</shortName>
    </alternativeName>
</protein>